<evidence type="ECO:0000255" key="1">
    <source>
        <dbReference type="HAMAP-Rule" id="MF_00435"/>
    </source>
</evidence>
<evidence type="ECO:0000255" key="2">
    <source>
        <dbReference type="PROSITE-ProRule" id="PRU01197"/>
    </source>
</evidence>
<evidence type="ECO:0000255" key="3">
    <source>
        <dbReference type="PROSITE-ProRule" id="PRU01198"/>
    </source>
</evidence>
<dbReference type="EC" id="1.1.1.86" evidence="1"/>
<dbReference type="EMBL" id="CP001013">
    <property type="protein sequence ID" value="ACB35156.1"/>
    <property type="molecule type" value="Genomic_DNA"/>
</dbReference>
<dbReference type="RefSeq" id="WP_012347910.1">
    <property type="nucleotide sequence ID" value="NC_010524.1"/>
</dbReference>
<dbReference type="SMR" id="B1XYB1"/>
<dbReference type="STRING" id="395495.Lcho_2891"/>
<dbReference type="KEGG" id="lch:Lcho_2891"/>
<dbReference type="eggNOG" id="COG0059">
    <property type="taxonomic scope" value="Bacteria"/>
</dbReference>
<dbReference type="HOGENOM" id="CLU_033821_0_1_4"/>
<dbReference type="OrthoDB" id="9804088at2"/>
<dbReference type="UniPathway" id="UPA00047">
    <property type="reaction ID" value="UER00056"/>
</dbReference>
<dbReference type="UniPathway" id="UPA00049">
    <property type="reaction ID" value="UER00060"/>
</dbReference>
<dbReference type="Proteomes" id="UP000001693">
    <property type="component" value="Chromosome"/>
</dbReference>
<dbReference type="GO" id="GO:0005829">
    <property type="term" value="C:cytosol"/>
    <property type="evidence" value="ECO:0007669"/>
    <property type="project" value="TreeGrafter"/>
</dbReference>
<dbReference type="GO" id="GO:0004455">
    <property type="term" value="F:ketol-acid reductoisomerase activity"/>
    <property type="evidence" value="ECO:0007669"/>
    <property type="project" value="UniProtKB-UniRule"/>
</dbReference>
<dbReference type="GO" id="GO:0000287">
    <property type="term" value="F:magnesium ion binding"/>
    <property type="evidence" value="ECO:0007669"/>
    <property type="project" value="UniProtKB-UniRule"/>
</dbReference>
<dbReference type="GO" id="GO:0050661">
    <property type="term" value="F:NADP binding"/>
    <property type="evidence" value="ECO:0007669"/>
    <property type="project" value="InterPro"/>
</dbReference>
<dbReference type="GO" id="GO:0009097">
    <property type="term" value="P:isoleucine biosynthetic process"/>
    <property type="evidence" value="ECO:0007669"/>
    <property type="project" value="UniProtKB-UniRule"/>
</dbReference>
<dbReference type="GO" id="GO:0009099">
    <property type="term" value="P:L-valine biosynthetic process"/>
    <property type="evidence" value="ECO:0007669"/>
    <property type="project" value="UniProtKB-UniRule"/>
</dbReference>
<dbReference type="FunFam" id="3.40.50.720:FF:000023">
    <property type="entry name" value="Ketol-acid reductoisomerase (NADP(+))"/>
    <property type="match status" value="1"/>
</dbReference>
<dbReference type="Gene3D" id="6.10.240.10">
    <property type="match status" value="1"/>
</dbReference>
<dbReference type="Gene3D" id="3.40.50.720">
    <property type="entry name" value="NAD(P)-binding Rossmann-like Domain"/>
    <property type="match status" value="1"/>
</dbReference>
<dbReference type="HAMAP" id="MF_00435">
    <property type="entry name" value="IlvC"/>
    <property type="match status" value="1"/>
</dbReference>
<dbReference type="InterPro" id="IPR008927">
    <property type="entry name" value="6-PGluconate_DH-like_C_sf"/>
</dbReference>
<dbReference type="InterPro" id="IPR013023">
    <property type="entry name" value="KARI"/>
</dbReference>
<dbReference type="InterPro" id="IPR000506">
    <property type="entry name" value="KARI_C"/>
</dbReference>
<dbReference type="InterPro" id="IPR013116">
    <property type="entry name" value="KARI_N"/>
</dbReference>
<dbReference type="InterPro" id="IPR014359">
    <property type="entry name" value="KARI_prok"/>
</dbReference>
<dbReference type="InterPro" id="IPR036291">
    <property type="entry name" value="NAD(P)-bd_dom_sf"/>
</dbReference>
<dbReference type="NCBIfam" id="TIGR00465">
    <property type="entry name" value="ilvC"/>
    <property type="match status" value="1"/>
</dbReference>
<dbReference type="NCBIfam" id="NF004017">
    <property type="entry name" value="PRK05479.1"/>
    <property type="match status" value="1"/>
</dbReference>
<dbReference type="NCBIfam" id="NF009940">
    <property type="entry name" value="PRK13403.1"/>
    <property type="match status" value="1"/>
</dbReference>
<dbReference type="PANTHER" id="PTHR21371">
    <property type="entry name" value="KETOL-ACID REDUCTOISOMERASE, MITOCHONDRIAL"/>
    <property type="match status" value="1"/>
</dbReference>
<dbReference type="PANTHER" id="PTHR21371:SF1">
    <property type="entry name" value="KETOL-ACID REDUCTOISOMERASE, MITOCHONDRIAL"/>
    <property type="match status" value="1"/>
</dbReference>
<dbReference type="Pfam" id="PF01450">
    <property type="entry name" value="KARI_C"/>
    <property type="match status" value="1"/>
</dbReference>
<dbReference type="Pfam" id="PF07991">
    <property type="entry name" value="KARI_N"/>
    <property type="match status" value="1"/>
</dbReference>
<dbReference type="PIRSF" id="PIRSF000116">
    <property type="entry name" value="IlvC_gammaproteo"/>
    <property type="match status" value="1"/>
</dbReference>
<dbReference type="SUPFAM" id="SSF48179">
    <property type="entry name" value="6-phosphogluconate dehydrogenase C-terminal domain-like"/>
    <property type="match status" value="1"/>
</dbReference>
<dbReference type="SUPFAM" id="SSF51735">
    <property type="entry name" value="NAD(P)-binding Rossmann-fold domains"/>
    <property type="match status" value="1"/>
</dbReference>
<dbReference type="PROSITE" id="PS51851">
    <property type="entry name" value="KARI_C"/>
    <property type="match status" value="1"/>
</dbReference>
<dbReference type="PROSITE" id="PS51850">
    <property type="entry name" value="KARI_N"/>
    <property type="match status" value="1"/>
</dbReference>
<proteinExistence type="inferred from homology"/>
<protein>
    <recommendedName>
        <fullName evidence="1">Ketol-acid reductoisomerase (NADP(+))</fullName>
        <shortName evidence="1">KARI</shortName>
        <ecNumber evidence="1">1.1.1.86</ecNumber>
    </recommendedName>
    <alternativeName>
        <fullName evidence="1">Acetohydroxy-acid isomeroreductase</fullName>
        <shortName evidence="1">AHIR</shortName>
    </alternativeName>
    <alternativeName>
        <fullName evidence="1">Alpha-keto-beta-hydroxylacyl reductoisomerase</fullName>
    </alternativeName>
    <alternativeName>
        <fullName evidence="1">Ketol-acid reductoisomerase type 1</fullName>
    </alternativeName>
    <alternativeName>
        <fullName evidence="1">Ketol-acid reductoisomerase type I</fullName>
    </alternativeName>
</protein>
<comment type="function">
    <text evidence="1">Involved in the biosynthesis of branched-chain amino acids (BCAA). Catalyzes an alkyl-migration followed by a ketol-acid reduction of (S)-2-acetolactate (S2AL) to yield (R)-2,3-dihydroxy-isovalerate. In the isomerase reaction, S2AL is rearranged via a Mg-dependent methyl migration to produce 3-hydroxy-3-methyl-2-ketobutyrate (HMKB). In the reductase reaction, this 2-ketoacid undergoes a metal-dependent reduction by NADPH to yield (R)-2,3-dihydroxy-isovalerate.</text>
</comment>
<comment type="catalytic activity">
    <reaction evidence="1">
        <text>(2R)-2,3-dihydroxy-3-methylbutanoate + NADP(+) = (2S)-2-acetolactate + NADPH + H(+)</text>
        <dbReference type="Rhea" id="RHEA:22068"/>
        <dbReference type="ChEBI" id="CHEBI:15378"/>
        <dbReference type="ChEBI" id="CHEBI:49072"/>
        <dbReference type="ChEBI" id="CHEBI:57783"/>
        <dbReference type="ChEBI" id="CHEBI:58349"/>
        <dbReference type="ChEBI" id="CHEBI:58476"/>
        <dbReference type="EC" id="1.1.1.86"/>
    </reaction>
</comment>
<comment type="catalytic activity">
    <reaction evidence="1">
        <text>(2R,3R)-2,3-dihydroxy-3-methylpentanoate + NADP(+) = (S)-2-ethyl-2-hydroxy-3-oxobutanoate + NADPH + H(+)</text>
        <dbReference type="Rhea" id="RHEA:13493"/>
        <dbReference type="ChEBI" id="CHEBI:15378"/>
        <dbReference type="ChEBI" id="CHEBI:49256"/>
        <dbReference type="ChEBI" id="CHEBI:49258"/>
        <dbReference type="ChEBI" id="CHEBI:57783"/>
        <dbReference type="ChEBI" id="CHEBI:58349"/>
        <dbReference type="EC" id="1.1.1.86"/>
    </reaction>
</comment>
<comment type="cofactor">
    <cofactor evidence="1">
        <name>Mg(2+)</name>
        <dbReference type="ChEBI" id="CHEBI:18420"/>
    </cofactor>
    <text evidence="1">Binds 2 magnesium ions per subunit.</text>
</comment>
<comment type="pathway">
    <text evidence="1">Amino-acid biosynthesis; L-isoleucine biosynthesis; L-isoleucine from 2-oxobutanoate: step 2/4.</text>
</comment>
<comment type="pathway">
    <text evidence="1">Amino-acid biosynthesis; L-valine biosynthesis; L-valine from pyruvate: step 2/4.</text>
</comment>
<comment type="similarity">
    <text evidence="1">Belongs to the ketol-acid reductoisomerase family.</text>
</comment>
<gene>
    <name evidence="1" type="primary">ilvC</name>
    <name type="ordered locus">Lcho_2891</name>
</gene>
<organism>
    <name type="scientific">Leptothrix cholodnii (strain ATCC 51168 / LMG 8142 / SP-6)</name>
    <name type="common">Leptothrix discophora (strain SP-6)</name>
    <dbReference type="NCBI Taxonomy" id="395495"/>
    <lineage>
        <taxon>Bacteria</taxon>
        <taxon>Pseudomonadati</taxon>
        <taxon>Pseudomonadota</taxon>
        <taxon>Betaproteobacteria</taxon>
        <taxon>Burkholderiales</taxon>
        <taxon>Sphaerotilaceae</taxon>
        <taxon>Leptothrix</taxon>
    </lineage>
</organism>
<reference key="1">
    <citation type="submission" date="2008-03" db="EMBL/GenBank/DDBJ databases">
        <title>Complete sequence of Leptothrix cholodnii SP-6.</title>
        <authorList>
            <consortium name="US DOE Joint Genome Institute"/>
            <person name="Copeland A."/>
            <person name="Lucas S."/>
            <person name="Lapidus A."/>
            <person name="Glavina del Rio T."/>
            <person name="Dalin E."/>
            <person name="Tice H."/>
            <person name="Bruce D."/>
            <person name="Goodwin L."/>
            <person name="Pitluck S."/>
            <person name="Chertkov O."/>
            <person name="Brettin T."/>
            <person name="Detter J.C."/>
            <person name="Han C."/>
            <person name="Kuske C.R."/>
            <person name="Schmutz J."/>
            <person name="Larimer F."/>
            <person name="Land M."/>
            <person name="Hauser L."/>
            <person name="Kyrpides N."/>
            <person name="Lykidis A."/>
            <person name="Emerson D."/>
            <person name="Richardson P."/>
        </authorList>
    </citation>
    <scope>NUCLEOTIDE SEQUENCE [LARGE SCALE GENOMIC DNA]</scope>
    <source>
        <strain>ATCC 51168 / LMG 8142 / SP-6</strain>
    </source>
</reference>
<accession>B1XYB1</accession>
<name>ILVC_LEPCP</name>
<sequence length="338" mass="36485">MKVFYDKDADLSLIKGKNVTIIGYGSQGHAHAQNLNDSGVKVTVGLRRGGASWAKVEKAGLKVAEVADAVKSADVVMMLLPDEQIAAVYNAEVAPNMKEGASLAFAHGFNVHYGQVVPRADVDVWMVAPKAPGHTVRNTYTQGGGVPHLIAVHADKTGKARDLALSYAAANGGGKAGIIETNFREETETDLFGEQAVLCGGTVELIKAGFETLVEAGYAPEMAYFECLHELKLIVDLIYEGGIANMNYSISNNAEYGEYVTGPRVVTAATKDAMRQCLKDIQTGEYAKSFILENKAGAPTLISRRRLTEEHQIEVVGEKLRAMMPWIKANKLVDKSRN</sequence>
<feature type="chain" id="PRO_1000124304" description="Ketol-acid reductoisomerase (NADP(+))">
    <location>
        <begin position="1"/>
        <end position="338"/>
    </location>
</feature>
<feature type="domain" description="KARI N-terminal Rossmann" evidence="2">
    <location>
        <begin position="1"/>
        <end position="181"/>
    </location>
</feature>
<feature type="domain" description="KARI C-terminal knotted" evidence="3">
    <location>
        <begin position="182"/>
        <end position="327"/>
    </location>
</feature>
<feature type="active site" evidence="1">
    <location>
        <position position="107"/>
    </location>
</feature>
<feature type="binding site" evidence="1">
    <location>
        <begin position="24"/>
        <end position="27"/>
    </location>
    <ligand>
        <name>NADP(+)</name>
        <dbReference type="ChEBI" id="CHEBI:58349"/>
    </ligand>
</feature>
<feature type="binding site" evidence="1">
    <location>
        <position position="47"/>
    </location>
    <ligand>
        <name>NADP(+)</name>
        <dbReference type="ChEBI" id="CHEBI:58349"/>
    </ligand>
</feature>
<feature type="binding site" evidence="1">
    <location>
        <position position="52"/>
    </location>
    <ligand>
        <name>NADP(+)</name>
        <dbReference type="ChEBI" id="CHEBI:58349"/>
    </ligand>
</feature>
<feature type="binding site" evidence="1">
    <location>
        <position position="133"/>
    </location>
    <ligand>
        <name>NADP(+)</name>
        <dbReference type="ChEBI" id="CHEBI:58349"/>
    </ligand>
</feature>
<feature type="binding site" evidence="1">
    <location>
        <position position="190"/>
    </location>
    <ligand>
        <name>Mg(2+)</name>
        <dbReference type="ChEBI" id="CHEBI:18420"/>
        <label>1</label>
    </ligand>
</feature>
<feature type="binding site" evidence="1">
    <location>
        <position position="190"/>
    </location>
    <ligand>
        <name>Mg(2+)</name>
        <dbReference type="ChEBI" id="CHEBI:18420"/>
        <label>2</label>
    </ligand>
</feature>
<feature type="binding site" evidence="1">
    <location>
        <position position="194"/>
    </location>
    <ligand>
        <name>Mg(2+)</name>
        <dbReference type="ChEBI" id="CHEBI:18420"/>
        <label>1</label>
    </ligand>
</feature>
<feature type="binding site" evidence="1">
    <location>
        <position position="226"/>
    </location>
    <ligand>
        <name>Mg(2+)</name>
        <dbReference type="ChEBI" id="CHEBI:18420"/>
        <label>2</label>
    </ligand>
</feature>
<feature type="binding site" evidence="1">
    <location>
        <position position="230"/>
    </location>
    <ligand>
        <name>Mg(2+)</name>
        <dbReference type="ChEBI" id="CHEBI:18420"/>
        <label>2</label>
    </ligand>
</feature>
<feature type="binding site" evidence="1">
    <location>
        <position position="251"/>
    </location>
    <ligand>
        <name>substrate</name>
    </ligand>
</feature>
<keyword id="KW-0028">Amino-acid biosynthesis</keyword>
<keyword id="KW-0100">Branched-chain amino acid biosynthesis</keyword>
<keyword id="KW-0460">Magnesium</keyword>
<keyword id="KW-0479">Metal-binding</keyword>
<keyword id="KW-0521">NADP</keyword>
<keyword id="KW-0560">Oxidoreductase</keyword>
<keyword id="KW-1185">Reference proteome</keyword>